<reference key="1">
    <citation type="journal article" date="1998" name="Science">
        <title>Genome sequence of the nematode C. elegans: a platform for investigating biology.</title>
        <authorList>
            <consortium name="The C. elegans sequencing consortium"/>
        </authorList>
    </citation>
    <scope>NUCLEOTIDE SEQUENCE [LARGE SCALE GENOMIC DNA]</scope>
    <source>
        <strain>Bristol N2</strain>
    </source>
</reference>
<reference key="2">
    <citation type="journal article" date="2000" name="Brain Res.">
        <title>UNCL, the mammalian homologue of UNC-50, is an inner nuclear membrane RNA-binding protein.</title>
        <authorList>
            <person name="Fitzgerald J."/>
            <person name="Kennedy D."/>
            <person name="Viseshakul N."/>
            <person name="Cohen B.N."/>
            <person name="Mattick J."/>
            <person name="Bateman J.F."/>
            <person name="Forsayeth J.R."/>
        </authorList>
    </citation>
    <scope>IDENTIFICATION</scope>
</reference>
<reference key="3">
    <citation type="journal article" date="2007" name="EMBO J.">
        <title>Regulation of nicotinic receptor trafficking by the transmembrane Golgi protein UNC-50.</title>
        <authorList>
            <person name="Eimer S."/>
            <person name="Gottschalk A."/>
            <person name="Hengartner M."/>
            <person name="Horvitz H.R."/>
            <person name="Richmond J."/>
            <person name="Schafer W.R."/>
            <person name="Bessereau J.-L."/>
        </authorList>
    </citation>
    <scope>FUNCTION</scope>
    <scope>DEVELOPMENTAL STAGE</scope>
    <scope>SUBCELLULAR LOCATION</scope>
</reference>
<proteinExistence type="evidence at transcript level"/>
<protein>
    <recommendedName>
        <fullName>Protein unc-50</fullName>
    </recommendedName>
    <alternativeName>
        <fullName>Uncoordinated protein 50</fullName>
    </alternativeName>
</protein>
<feature type="chain" id="PRO_0000065452" description="Protein unc-50">
    <location>
        <begin position="1"/>
        <end position="301"/>
    </location>
</feature>
<feature type="topological domain" description="Cytoplasmic" evidence="1">
    <location>
        <begin position="1"/>
        <end position="115"/>
    </location>
</feature>
<feature type="transmembrane region" description="Helical" evidence="1">
    <location>
        <begin position="116"/>
        <end position="136"/>
    </location>
</feature>
<feature type="topological domain" description="Lumenal" evidence="1">
    <location>
        <begin position="137"/>
        <end position="142"/>
    </location>
</feature>
<feature type="transmembrane region" description="Helical" evidence="1">
    <location>
        <begin position="143"/>
        <end position="163"/>
    </location>
</feature>
<feature type="topological domain" description="Cytoplasmic" evidence="1">
    <location>
        <begin position="164"/>
        <end position="193"/>
    </location>
</feature>
<feature type="transmembrane region" description="Helical" evidence="1">
    <location>
        <begin position="194"/>
        <end position="214"/>
    </location>
</feature>
<feature type="topological domain" description="Lumenal" evidence="1">
    <location>
        <begin position="215"/>
        <end position="221"/>
    </location>
</feature>
<feature type="transmembrane region" description="Helical" evidence="1">
    <location>
        <begin position="222"/>
        <end position="242"/>
    </location>
</feature>
<feature type="topological domain" description="Cytoplasmic" evidence="1">
    <location>
        <begin position="243"/>
        <end position="254"/>
    </location>
</feature>
<feature type="transmembrane region" description="Helical" evidence="1">
    <location>
        <begin position="255"/>
        <end position="275"/>
    </location>
</feature>
<feature type="topological domain" description="Lumenal" evidence="1">
    <location>
        <begin position="276"/>
        <end position="301"/>
    </location>
</feature>
<feature type="region of interest" description="Disordered" evidence="2">
    <location>
        <begin position="1"/>
        <end position="22"/>
    </location>
</feature>
<evidence type="ECO:0000255" key="1"/>
<evidence type="ECO:0000256" key="2">
    <source>
        <dbReference type="SAM" id="MobiDB-lite"/>
    </source>
</evidence>
<evidence type="ECO:0000269" key="3">
    <source>
    </source>
</evidence>
<evidence type="ECO:0000305" key="4"/>
<name>UNC50_CAEEL</name>
<gene>
    <name type="primary">unc-50</name>
    <name type="ORF">T07A5.2</name>
</gene>
<comment type="function">
    <text evidence="3">Required for cell surface expression of acetylcholine receptors in body-wall muscles.</text>
</comment>
<comment type="subcellular location">
    <subcellularLocation>
        <location evidence="3">Golgi apparatus membrane</location>
        <topology evidence="3">Multi-pass membrane protein</topology>
    </subcellularLocation>
</comment>
<comment type="developmental stage">
    <text evidence="3">Ubiquitously expressed, from early embryogenesis to adulthood.</text>
</comment>
<comment type="similarity">
    <text evidence="4">Belongs to the unc-50 family.</text>
</comment>
<sequence length="301" mass="34739">MSSQPRGSGTQPGPSQSPISQRNFRYEPARSGYTSPGQYSTYSTSTADRVGCLTAVRMSAFAKLSRFTRRLVHIRQMDFEFALWQMLYLLIQPSKVYKNFIYRKRTKDQFARDDPAFLVLLALSLLFSSIFYAYALGLEKIGFFTFFLWSVFVDCIGVGVVIATVLWWVSNRFLRKVRDQDVEWGYCFDVHLNAFFPMLILLHVIVPILYPTLIDSPAFLSILLGNTFWFLAACYYVYITFLGYTALPILHKTQYFLYPISFIFMFFVATLTGGWNISRTALNFYHSRAEPHKFAPQHGGL</sequence>
<dbReference type="EMBL" id="Z48055">
    <property type="protein sequence ID" value="CAA88132.2"/>
    <property type="molecule type" value="Genomic_DNA"/>
</dbReference>
<dbReference type="PIR" id="T24631">
    <property type="entry name" value="T24631"/>
</dbReference>
<dbReference type="RefSeq" id="NP_499279.2">
    <property type="nucleotide sequence ID" value="NM_066878.5"/>
</dbReference>
<dbReference type="FunCoup" id="Q10045">
    <property type="interactions" value="3165"/>
</dbReference>
<dbReference type="IntAct" id="Q10045">
    <property type="interactions" value="2"/>
</dbReference>
<dbReference type="MINT" id="Q10045"/>
<dbReference type="STRING" id="6239.T07A5.2.1"/>
<dbReference type="iPTMnet" id="Q10045"/>
<dbReference type="PaxDb" id="6239-T07A5.2"/>
<dbReference type="PeptideAtlas" id="Q10045"/>
<dbReference type="EnsemblMetazoa" id="T07A5.2.1">
    <property type="protein sequence ID" value="T07A5.2.1"/>
    <property type="gene ID" value="WBGene00006785"/>
</dbReference>
<dbReference type="GeneID" id="176443"/>
<dbReference type="KEGG" id="cel:CELE_T07A5.2"/>
<dbReference type="UCSC" id="T07A5.2">
    <property type="organism name" value="c. elegans"/>
</dbReference>
<dbReference type="AGR" id="WB:WBGene00006785"/>
<dbReference type="CTD" id="176443"/>
<dbReference type="WormBase" id="T07A5.2">
    <property type="protein sequence ID" value="CE36501"/>
    <property type="gene ID" value="WBGene00006785"/>
    <property type="gene designation" value="unc-50"/>
</dbReference>
<dbReference type="eggNOG" id="KOG3012">
    <property type="taxonomic scope" value="Eukaryota"/>
</dbReference>
<dbReference type="GeneTree" id="ENSGT00390000018553"/>
<dbReference type="HOGENOM" id="CLU_066239_1_0_1"/>
<dbReference type="InParanoid" id="Q10045"/>
<dbReference type="OMA" id="YRNFMYR"/>
<dbReference type="OrthoDB" id="10027013at2759"/>
<dbReference type="PhylomeDB" id="Q10045"/>
<dbReference type="PRO" id="PR:Q10045"/>
<dbReference type="Proteomes" id="UP000001940">
    <property type="component" value="Chromosome III"/>
</dbReference>
<dbReference type="Bgee" id="WBGene00006785">
    <property type="expression patterns" value="Expressed in pharyngeal muscle cell (C elegans) and 5 other cell types or tissues"/>
</dbReference>
<dbReference type="GO" id="GO:0000139">
    <property type="term" value="C:Golgi membrane"/>
    <property type="evidence" value="ECO:0000314"/>
    <property type="project" value="WormBase"/>
</dbReference>
<dbReference type="GO" id="GO:0097120">
    <property type="term" value="P:receptor localization to synapse"/>
    <property type="evidence" value="ECO:0000315"/>
    <property type="project" value="WormBase"/>
</dbReference>
<dbReference type="GO" id="GO:0006937">
    <property type="term" value="P:regulation of muscle contraction"/>
    <property type="evidence" value="ECO:0000316"/>
    <property type="project" value="UniProtKB"/>
</dbReference>
<dbReference type="InterPro" id="IPR007881">
    <property type="entry name" value="UNC-50"/>
</dbReference>
<dbReference type="PANTHER" id="PTHR12841">
    <property type="entry name" value="PROTEIN UNC-50 HOMOLOG"/>
    <property type="match status" value="1"/>
</dbReference>
<dbReference type="PANTHER" id="PTHR12841:SF6">
    <property type="entry name" value="PROTEIN UNC-50 HOMOLOG"/>
    <property type="match status" value="1"/>
</dbReference>
<dbReference type="Pfam" id="PF05216">
    <property type="entry name" value="UNC-50"/>
    <property type="match status" value="1"/>
</dbReference>
<keyword id="KW-0333">Golgi apparatus</keyword>
<keyword id="KW-0472">Membrane</keyword>
<keyword id="KW-1185">Reference proteome</keyword>
<keyword id="KW-0812">Transmembrane</keyword>
<keyword id="KW-1133">Transmembrane helix</keyword>
<organism>
    <name type="scientific">Caenorhabditis elegans</name>
    <dbReference type="NCBI Taxonomy" id="6239"/>
    <lineage>
        <taxon>Eukaryota</taxon>
        <taxon>Metazoa</taxon>
        <taxon>Ecdysozoa</taxon>
        <taxon>Nematoda</taxon>
        <taxon>Chromadorea</taxon>
        <taxon>Rhabditida</taxon>
        <taxon>Rhabditina</taxon>
        <taxon>Rhabditomorpha</taxon>
        <taxon>Rhabditoidea</taxon>
        <taxon>Rhabditidae</taxon>
        <taxon>Peloderinae</taxon>
        <taxon>Caenorhabditis</taxon>
    </lineage>
</organism>
<accession>Q10045</accession>